<comment type="catalytic activity">
    <reaction evidence="1">
        <text>tRNA(Gly) + glycine + ATP = glycyl-tRNA(Gly) + AMP + diphosphate</text>
        <dbReference type="Rhea" id="RHEA:16013"/>
        <dbReference type="Rhea" id="RHEA-COMP:9664"/>
        <dbReference type="Rhea" id="RHEA-COMP:9683"/>
        <dbReference type="ChEBI" id="CHEBI:30616"/>
        <dbReference type="ChEBI" id="CHEBI:33019"/>
        <dbReference type="ChEBI" id="CHEBI:57305"/>
        <dbReference type="ChEBI" id="CHEBI:78442"/>
        <dbReference type="ChEBI" id="CHEBI:78522"/>
        <dbReference type="ChEBI" id="CHEBI:456215"/>
        <dbReference type="EC" id="6.1.1.14"/>
    </reaction>
</comment>
<comment type="subunit">
    <text evidence="1">Tetramer of two alpha and two beta subunits.</text>
</comment>
<comment type="subcellular location">
    <subcellularLocation>
        <location evidence="1">Cytoplasm</location>
    </subcellularLocation>
</comment>
<comment type="similarity">
    <text evidence="1">Belongs to the class-II aminoacyl-tRNA synthetase family.</text>
</comment>
<organism>
    <name type="scientific">Salmonella typhimurium (strain LT2 / SGSC1412 / ATCC 700720)</name>
    <dbReference type="NCBI Taxonomy" id="99287"/>
    <lineage>
        <taxon>Bacteria</taxon>
        <taxon>Pseudomonadati</taxon>
        <taxon>Pseudomonadota</taxon>
        <taxon>Gammaproteobacteria</taxon>
        <taxon>Enterobacterales</taxon>
        <taxon>Enterobacteriaceae</taxon>
        <taxon>Salmonella</taxon>
    </lineage>
</organism>
<reference key="1">
    <citation type="journal article" date="2001" name="Nature">
        <title>Complete genome sequence of Salmonella enterica serovar Typhimurium LT2.</title>
        <authorList>
            <person name="McClelland M."/>
            <person name="Sanderson K.E."/>
            <person name="Spieth J."/>
            <person name="Clifton S.W."/>
            <person name="Latreille P."/>
            <person name="Courtney L."/>
            <person name="Porwollik S."/>
            <person name="Ali J."/>
            <person name="Dante M."/>
            <person name="Du F."/>
            <person name="Hou S."/>
            <person name="Layman D."/>
            <person name="Leonard S."/>
            <person name="Nguyen C."/>
            <person name="Scott K."/>
            <person name="Holmes A."/>
            <person name="Grewal N."/>
            <person name="Mulvaney E."/>
            <person name="Ryan E."/>
            <person name="Sun H."/>
            <person name="Florea L."/>
            <person name="Miller W."/>
            <person name="Stoneking T."/>
            <person name="Nhan M."/>
            <person name="Waterston R."/>
            <person name="Wilson R.K."/>
        </authorList>
    </citation>
    <scope>NUCLEOTIDE SEQUENCE [LARGE SCALE GENOMIC DNA]</scope>
    <source>
        <strain>LT2 / SGSC1412 / ATCC 700720</strain>
    </source>
</reference>
<protein>
    <recommendedName>
        <fullName evidence="1">Glycine--tRNA ligase alpha subunit</fullName>
        <ecNumber evidence="1">6.1.1.14</ecNumber>
    </recommendedName>
    <alternativeName>
        <fullName evidence="1">Glycyl-tRNA synthetase alpha subunit</fullName>
        <shortName evidence="1">GlyRS</shortName>
    </alternativeName>
</protein>
<evidence type="ECO:0000255" key="1">
    <source>
        <dbReference type="HAMAP-Rule" id="MF_00254"/>
    </source>
</evidence>
<proteinExistence type="inferred from homology"/>
<gene>
    <name evidence="1" type="primary">glyQ</name>
    <name type="ordered locus">STM3656</name>
</gene>
<sequence length="303" mass="34746">MQKFDTRTFQGLILTLQDYWARQGCTIVQPLDMEVGAGTSHPMTCLRALGPEPMATAYVQPSRRPTDGRYGENPNRLQHYYQFQVVIKPSPDNIQELYLGSLKELGMDPTIHDIRFVEDNWENPTLGAWGLGWEVWLNGMEVTQFTYFQQVGGLECKPVTGEITYGLERLAMYIQGVDSVYDLVWSDGPLGKTTYGDVFHQNEVEQSTYNFEYADVDFLFTCFEQYEKEAQQLLALENPLPLPAYERILKAAHSFNLLDARKAISVTERQRYILRIRTLTKAVAEAYYASREALGFPMCNKDK</sequence>
<accession>Q8ZL95</accession>
<name>SYGA_SALTY</name>
<keyword id="KW-0030">Aminoacyl-tRNA synthetase</keyword>
<keyword id="KW-0067">ATP-binding</keyword>
<keyword id="KW-0963">Cytoplasm</keyword>
<keyword id="KW-0436">Ligase</keyword>
<keyword id="KW-0547">Nucleotide-binding</keyword>
<keyword id="KW-0648">Protein biosynthesis</keyword>
<keyword id="KW-1185">Reference proteome</keyword>
<feature type="chain" id="PRO_0000072863" description="Glycine--tRNA ligase alpha subunit">
    <location>
        <begin position="1"/>
        <end position="303"/>
    </location>
</feature>
<dbReference type="EC" id="6.1.1.14" evidence="1"/>
<dbReference type="EMBL" id="AE006468">
    <property type="protein sequence ID" value="AAL22515.1"/>
    <property type="molecule type" value="Genomic_DNA"/>
</dbReference>
<dbReference type="RefSeq" id="NP_462556.1">
    <property type="nucleotide sequence ID" value="NC_003197.2"/>
</dbReference>
<dbReference type="RefSeq" id="WP_001168551.1">
    <property type="nucleotide sequence ID" value="NC_003197.2"/>
</dbReference>
<dbReference type="SMR" id="Q8ZL95"/>
<dbReference type="STRING" id="99287.STM3656"/>
<dbReference type="PaxDb" id="99287-STM3656"/>
<dbReference type="GeneID" id="1255180"/>
<dbReference type="GeneID" id="89546728"/>
<dbReference type="KEGG" id="stm:STM3656"/>
<dbReference type="PATRIC" id="fig|99287.12.peg.3867"/>
<dbReference type="HOGENOM" id="CLU_057066_1_0_6"/>
<dbReference type="OMA" id="SYYQFQV"/>
<dbReference type="PhylomeDB" id="Q8ZL95"/>
<dbReference type="BioCyc" id="SENT99287:STM3656-MONOMER"/>
<dbReference type="Proteomes" id="UP000001014">
    <property type="component" value="Chromosome"/>
</dbReference>
<dbReference type="GO" id="GO:0005737">
    <property type="term" value="C:cytoplasm"/>
    <property type="evidence" value="ECO:0007669"/>
    <property type="project" value="UniProtKB-SubCell"/>
</dbReference>
<dbReference type="GO" id="GO:0005524">
    <property type="term" value="F:ATP binding"/>
    <property type="evidence" value="ECO:0007669"/>
    <property type="project" value="UniProtKB-UniRule"/>
</dbReference>
<dbReference type="GO" id="GO:0004820">
    <property type="term" value="F:glycine-tRNA ligase activity"/>
    <property type="evidence" value="ECO:0007669"/>
    <property type="project" value="UniProtKB-UniRule"/>
</dbReference>
<dbReference type="GO" id="GO:0006426">
    <property type="term" value="P:glycyl-tRNA aminoacylation"/>
    <property type="evidence" value="ECO:0007669"/>
    <property type="project" value="UniProtKB-UniRule"/>
</dbReference>
<dbReference type="CDD" id="cd00733">
    <property type="entry name" value="GlyRS_alpha_core"/>
    <property type="match status" value="1"/>
</dbReference>
<dbReference type="FunFam" id="1.20.58.180:FF:000001">
    <property type="entry name" value="Glycine--tRNA ligase alpha subunit"/>
    <property type="match status" value="1"/>
</dbReference>
<dbReference type="FunFam" id="3.30.930.10:FF:000006">
    <property type="entry name" value="Glycine--tRNA ligase alpha subunit"/>
    <property type="match status" value="1"/>
</dbReference>
<dbReference type="Gene3D" id="3.30.930.10">
    <property type="entry name" value="Bira Bifunctional Protein, Domain 2"/>
    <property type="match status" value="1"/>
</dbReference>
<dbReference type="Gene3D" id="1.20.58.180">
    <property type="entry name" value="Class II aaRS and biotin synthetases, domain 2"/>
    <property type="match status" value="1"/>
</dbReference>
<dbReference type="HAMAP" id="MF_00254">
    <property type="entry name" value="Gly_tRNA_synth_alpha"/>
    <property type="match status" value="1"/>
</dbReference>
<dbReference type="InterPro" id="IPR045864">
    <property type="entry name" value="aa-tRNA-synth_II/BPL/LPL"/>
</dbReference>
<dbReference type="InterPro" id="IPR006194">
    <property type="entry name" value="Gly-tRNA-synth_heterodimer"/>
</dbReference>
<dbReference type="InterPro" id="IPR002310">
    <property type="entry name" value="Gly-tRNA_ligase_asu"/>
</dbReference>
<dbReference type="NCBIfam" id="TIGR00388">
    <property type="entry name" value="glyQ"/>
    <property type="match status" value="1"/>
</dbReference>
<dbReference type="NCBIfam" id="NF006827">
    <property type="entry name" value="PRK09348.1"/>
    <property type="match status" value="1"/>
</dbReference>
<dbReference type="PANTHER" id="PTHR30075:SF2">
    <property type="entry name" value="GLYCINE--TRNA LIGASE, CHLOROPLASTIC_MITOCHONDRIAL 2"/>
    <property type="match status" value="1"/>
</dbReference>
<dbReference type="PANTHER" id="PTHR30075">
    <property type="entry name" value="GLYCYL-TRNA SYNTHETASE"/>
    <property type="match status" value="1"/>
</dbReference>
<dbReference type="Pfam" id="PF02091">
    <property type="entry name" value="tRNA-synt_2e"/>
    <property type="match status" value="1"/>
</dbReference>
<dbReference type="PRINTS" id="PR01044">
    <property type="entry name" value="TRNASYNTHGA"/>
</dbReference>
<dbReference type="SUPFAM" id="SSF55681">
    <property type="entry name" value="Class II aaRS and biotin synthetases"/>
    <property type="match status" value="1"/>
</dbReference>
<dbReference type="PROSITE" id="PS50861">
    <property type="entry name" value="AA_TRNA_LIGASE_II_GLYAB"/>
    <property type="match status" value="1"/>
</dbReference>